<name>SYY1_BACSU</name>
<protein>
    <recommendedName>
        <fullName evidence="1">Tyrosine--tRNA ligase 1</fullName>
        <ecNumber evidence="1">6.1.1.1</ecNumber>
    </recommendedName>
    <alternativeName>
        <fullName evidence="1">Tyrosyl-tRNA synthetase 1</fullName>
        <shortName evidence="1">TyrRS 1</shortName>
    </alternativeName>
</protein>
<sequence length="422" mass="47737">MTNLLEDLSFRGLIQQMTDEEGLNKQLNEEKIRLYSGFDPTADSLHIGHLLPILTLRRFQLAGHHPIALVGGATGLIGDPSGKKAERTLNTADIVSEWSQKIKNQLSRFLDFEAAENPAVIANNFDWIGKMNVIDFLRDVGKNFGINYMLAKDTVSSRIESGISYTEFSYMILQSYDFLNLYRDKNCKLQIGGSDQWGNITAGLELIRKSEEEGAKAFGLTIPLVTKADGTKFGKTEGGAIWLDKEKTSPYEFYQFWINTDDRDVVKYLKYFTFLSKEEIEAYAEKTETAPEKREAQKRLAEEVTSLVHGREALEQAINISQALFSGNIKELSAQDVKVGFKDVPSMEVDSTQELSLVDVLVQSKLSPSKRQAREDIQNGAVYINGERQTEINYTLSGEDRIENQFTVLRRGKKKYFLVTYK</sequence>
<evidence type="ECO:0000255" key="1">
    <source>
        <dbReference type="HAMAP-Rule" id="MF_02006"/>
    </source>
</evidence>
<gene>
    <name evidence="1" type="primary">tyrS1</name>
    <name type="ordered locus">BSU29670</name>
</gene>
<organism>
    <name type="scientific">Bacillus subtilis (strain 168)</name>
    <dbReference type="NCBI Taxonomy" id="224308"/>
    <lineage>
        <taxon>Bacteria</taxon>
        <taxon>Bacillati</taxon>
        <taxon>Bacillota</taxon>
        <taxon>Bacilli</taxon>
        <taxon>Bacillales</taxon>
        <taxon>Bacillaceae</taxon>
        <taxon>Bacillus</taxon>
    </lineage>
</organism>
<reference key="1">
    <citation type="journal article" date="1992" name="J. Bacteriol.">
        <title>Analysis of the Bacillus subtilis tyrS gene: conservation of a regulatory sequence in multiple tRNA synthetase genes.</title>
        <authorList>
            <person name="Henkin T.M."/>
            <person name="Glass B.L."/>
            <person name="Grundy F.J."/>
        </authorList>
    </citation>
    <scope>NUCLEOTIDE SEQUENCE [GENOMIC DNA]</scope>
</reference>
<reference key="2">
    <citation type="journal article" date="1997" name="Microbiology">
        <title>Sequencing and functional annotation of the Bacillus subtilis genes in the 200 kb rrnB-dnaB region.</title>
        <authorList>
            <person name="Lapidus A."/>
            <person name="Galleron N."/>
            <person name="Sorokin A."/>
            <person name="Ehrlich S.D."/>
        </authorList>
    </citation>
    <scope>NUCLEOTIDE SEQUENCE [GENOMIC DNA]</scope>
    <source>
        <strain>168</strain>
    </source>
</reference>
<reference key="3">
    <citation type="journal article" date="1997" name="Nature">
        <title>The complete genome sequence of the Gram-positive bacterium Bacillus subtilis.</title>
        <authorList>
            <person name="Kunst F."/>
            <person name="Ogasawara N."/>
            <person name="Moszer I."/>
            <person name="Albertini A.M."/>
            <person name="Alloni G."/>
            <person name="Azevedo V."/>
            <person name="Bertero M.G."/>
            <person name="Bessieres P."/>
            <person name="Bolotin A."/>
            <person name="Borchert S."/>
            <person name="Borriss R."/>
            <person name="Boursier L."/>
            <person name="Brans A."/>
            <person name="Braun M."/>
            <person name="Brignell S.C."/>
            <person name="Bron S."/>
            <person name="Brouillet S."/>
            <person name="Bruschi C.V."/>
            <person name="Caldwell B."/>
            <person name="Capuano V."/>
            <person name="Carter N.M."/>
            <person name="Choi S.-K."/>
            <person name="Codani J.-J."/>
            <person name="Connerton I.F."/>
            <person name="Cummings N.J."/>
            <person name="Daniel R.A."/>
            <person name="Denizot F."/>
            <person name="Devine K.M."/>
            <person name="Duesterhoeft A."/>
            <person name="Ehrlich S.D."/>
            <person name="Emmerson P.T."/>
            <person name="Entian K.-D."/>
            <person name="Errington J."/>
            <person name="Fabret C."/>
            <person name="Ferrari E."/>
            <person name="Foulger D."/>
            <person name="Fritz C."/>
            <person name="Fujita M."/>
            <person name="Fujita Y."/>
            <person name="Fuma S."/>
            <person name="Galizzi A."/>
            <person name="Galleron N."/>
            <person name="Ghim S.-Y."/>
            <person name="Glaser P."/>
            <person name="Goffeau A."/>
            <person name="Golightly E.J."/>
            <person name="Grandi G."/>
            <person name="Guiseppi G."/>
            <person name="Guy B.J."/>
            <person name="Haga K."/>
            <person name="Haiech J."/>
            <person name="Harwood C.R."/>
            <person name="Henaut A."/>
            <person name="Hilbert H."/>
            <person name="Holsappel S."/>
            <person name="Hosono S."/>
            <person name="Hullo M.-F."/>
            <person name="Itaya M."/>
            <person name="Jones L.-M."/>
            <person name="Joris B."/>
            <person name="Karamata D."/>
            <person name="Kasahara Y."/>
            <person name="Klaerr-Blanchard M."/>
            <person name="Klein C."/>
            <person name="Kobayashi Y."/>
            <person name="Koetter P."/>
            <person name="Koningstein G."/>
            <person name="Krogh S."/>
            <person name="Kumano M."/>
            <person name="Kurita K."/>
            <person name="Lapidus A."/>
            <person name="Lardinois S."/>
            <person name="Lauber J."/>
            <person name="Lazarevic V."/>
            <person name="Lee S.-M."/>
            <person name="Levine A."/>
            <person name="Liu H."/>
            <person name="Masuda S."/>
            <person name="Mauel C."/>
            <person name="Medigue C."/>
            <person name="Medina N."/>
            <person name="Mellado R.P."/>
            <person name="Mizuno M."/>
            <person name="Moestl D."/>
            <person name="Nakai S."/>
            <person name="Noback M."/>
            <person name="Noone D."/>
            <person name="O'Reilly M."/>
            <person name="Ogawa K."/>
            <person name="Ogiwara A."/>
            <person name="Oudega B."/>
            <person name="Park S.-H."/>
            <person name="Parro V."/>
            <person name="Pohl T.M."/>
            <person name="Portetelle D."/>
            <person name="Porwollik S."/>
            <person name="Prescott A.M."/>
            <person name="Presecan E."/>
            <person name="Pujic P."/>
            <person name="Purnelle B."/>
            <person name="Rapoport G."/>
            <person name="Rey M."/>
            <person name="Reynolds S."/>
            <person name="Rieger M."/>
            <person name="Rivolta C."/>
            <person name="Rocha E."/>
            <person name="Roche B."/>
            <person name="Rose M."/>
            <person name="Sadaie Y."/>
            <person name="Sato T."/>
            <person name="Scanlan E."/>
            <person name="Schleich S."/>
            <person name="Schroeter R."/>
            <person name="Scoffone F."/>
            <person name="Sekiguchi J."/>
            <person name="Sekowska A."/>
            <person name="Seror S.J."/>
            <person name="Serror P."/>
            <person name="Shin B.-S."/>
            <person name="Soldo B."/>
            <person name="Sorokin A."/>
            <person name="Tacconi E."/>
            <person name="Takagi T."/>
            <person name="Takahashi H."/>
            <person name="Takemaru K."/>
            <person name="Takeuchi M."/>
            <person name="Tamakoshi A."/>
            <person name="Tanaka T."/>
            <person name="Terpstra P."/>
            <person name="Tognoni A."/>
            <person name="Tosato V."/>
            <person name="Uchiyama S."/>
            <person name="Vandenbol M."/>
            <person name="Vannier F."/>
            <person name="Vassarotti A."/>
            <person name="Viari A."/>
            <person name="Wambutt R."/>
            <person name="Wedler E."/>
            <person name="Wedler H."/>
            <person name="Weitzenegger T."/>
            <person name="Winters P."/>
            <person name="Wipat A."/>
            <person name="Yamamoto H."/>
            <person name="Yamane K."/>
            <person name="Yasumoto K."/>
            <person name="Yata K."/>
            <person name="Yoshida K."/>
            <person name="Yoshikawa H.-F."/>
            <person name="Zumstein E."/>
            <person name="Yoshikawa H."/>
            <person name="Danchin A."/>
        </authorList>
    </citation>
    <scope>NUCLEOTIDE SEQUENCE [LARGE SCALE GENOMIC DNA]</scope>
    <source>
        <strain>168</strain>
    </source>
</reference>
<reference key="4">
    <citation type="journal article" date="1990" name="J. Bacteriol.">
        <title>Cloning and analysis of the Bacillus subtilis rpsD gene, encoding ribosomal protein S4.</title>
        <authorList>
            <person name="Grundy F.J."/>
            <person name="Henkin T.M."/>
        </authorList>
    </citation>
    <scope>NUCLEOTIDE SEQUENCE [GENOMIC DNA] OF 328-422</scope>
    <source>
        <strain>168</strain>
    </source>
</reference>
<dbReference type="EC" id="6.1.1.1" evidence="1"/>
<dbReference type="EMBL" id="M77668">
    <property type="protein sequence ID" value="AAA22878.1"/>
    <property type="molecule type" value="Genomic_DNA"/>
</dbReference>
<dbReference type="EMBL" id="M59358">
    <property type="protein sequence ID" value="AAA22718.1"/>
    <property type="molecule type" value="Genomic_DNA"/>
</dbReference>
<dbReference type="EMBL" id="AF008220">
    <property type="protein sequence ID" value="AAC00303.1"/>
    <property type="molecule type" value="Genomic_DNA"/>
</dbReference>
<dbReference type="EMBL" id="AL009126">
    <property type="protein sequence ID" value="CAB14945.1"/>
    <property type="molecule type" value="Genomic_DNA"/>
</dbReference>
<dbReference type="EMBL" id="L17309">
    <property type="protein sequence ID" value="AAA68288.1"/>
    <property type="molecule type" value="Genomic_DNA"/>
</dbReference>
<dbReference type="PIR" id="A42648">
    <property type="entry name" value="A42648"/>
</dbReference>
<dbReference type="SMR" id="P22326"/>
<dbReference type="FunCoup" id="P22326">
    <property type="interactions" value="635"/>
</dbReference>
<dbReference type="STRING" id="224308.BSU29670"/>
<dbReference type="jPOST" id="P22326"/>
<dbReference type="PaxDb" id="224308-BSU29670"/>
<dbReference type="EnsemblBacteria" id="CAB14945">
    <property type="protein sequence ID" value="CAB14945"/>
    <property type="gene ID" value="BSU_29670"/>
</dbReference>
<dbReference type="GeneID" id="938185"/>
<dbReference type="KEGG" id="bsu:BSU29670"/>
<dbReference type="PATRIC" id="fig|224308.179.peg.3225"/>
<dbReference type="eggNOG" id="COG0162">
    <property type="taxonomic scope" value="Bacteria"/>
</dbReference>
<dbReference type="InParanoid" id="P22326"/>
<dbReference type="OrthoDB" id="9804243at2"/>
<dbReference type="PhylomeDB" id="P22326"/>
<dbReference type="BioCyc" id="BSUB:BSU29670-MONOMER"/>
<dbReference type="Proteomes" id="UP000001570">
    <property type="component" value="Chromosome"/>
</dbReference>
<dbReference type="GO" id="GO:0005829">
    <property type="term" value="C:cytosol"/>
    <property type="evidence" value="ECO:0000318"/>
    <property type="project" value="GO_Central"/>
</dbReference>
<dbReference type="GO" id="GO:0005524">
    <property type="term" value="F:ATP binding"/>
    <property type="evidence" value="ECO:0007669"/>
    <property type="project" value="UniProtKB-UniRule"/>
</dbReference>
<dbReference type="GO" id="GO:0003723">
    <property type="term" value="F:RNA binding"/>
    <property type="evidence" value="ECO:0007669"/>
    <property type="project" value="UniProtKB-KW"/>
</dbReference>
<dbReference type="GO" id="GO:0004831">
    <property type="term" value="F:tyrosine-tRNA ligase activity"/>
    <property type="evidence" value="ECO:0000318"/>
    <property type="project" value="GO_Central"/>
</dbReference>
<dbReference type="GO" id="GO:0043039">
    <property type="term" value="P:tRNA aminoacylation"/>
    <property type="evidence" value="ECO:0000318"/>
    <property type="project" value="GO_Central"/>
</dbReference>
<dbReference type="GO" id="GO:0006437">
    <property type="term" value="P:tyrosyl-tRNA aminoacylation"/>
    <property type="evidence" value="ECO:0007669"/>
    <property type="project" value="UniProtKB-UniRule"/>
</dbReference>
<dbReference type="CDD" id="cd00165">
    <property type="entry name" value="S4"/>
    <property type="match status" value="1"/>
</dbReference>
<dbReference type="CDD" id="cd00395">
    <property type="entry name" value="Tyr_Trp_RS_core"/>
    <property type="match status" value="1"/>
</dbReference>
<dbReference type="FunFam" id="1.10.240.10:FF:000001">
    <property type="entry name" value="Tyrosine--tRNA ligase"/>
    <property type="match status" value="1"/>
</dbReference>
<dbReference type="FunFam" id="3.40.50.620:FF:000008">
    <property type="entry name" value="Tyrosine--tRNA ligase"/>
    <property type="match status" value="1"/>
</dbReference>
<dbReference type="Gene3D" id="3.40.50.620">
    <property type="entry name" value="HUPs"/>
    <property type="match status" value="1"/>
</dbReference>
<dbReference type="Gene3D" id="3.10.290.10">
    <property type="entry name" value="RNA-binding S4 domain"/>
    <property type="match status" value="1"/>
</dbReference>
<dbReference type="Gene3D" id="1.10.240.10">
    <property type="entry name" value="Tyrosyl-Transfer RNA Synthetase"/>
    <property type="match status" value="1"/>
</dbReference>
<dbReference type="HAMAP" id="MF_02006">
    <property type="entry name" value="Tyr_tRNA_synth_type1"/>
    <property type="match status" value="1"/>
</dbReference>
<dbReference type="InterPro" id="IPR001412">
    <property type="entry name" value="aa-tRNA-synth_I_CS"/>
</dbReference>
<dbReference type="InterPro" id="IPR002305">
    <property type="entry name" value="aa-tRNA-synth_Ic"/>
</dbReference>
<dbReference type="InterPro" id="IPR014729">
    <property type="entry name" value="Rossmann-like_a/b/a_fold"/>
</dbReference>
<dbReference type="InterPro" id="IPR002942">
    <property type="entry name" value="S4_RNA-bd"/>
</dbReference>
<dbReference type="InterPro" id="IPR036986">
    <property type="entry name" value="S4_RNA-bd_sf"/>
</dbReference>
<dbReference type="InterPro" id="IPR054608">
    <property type="entry name" value="SYY-like_C"/>
</dbReference>
<dbReference type="InterPro" id="IPR002307">
    <property type="entry name" value="Tyr-tRNA-ligase"/>
</dbReference>
<dbReference type="InterPro" id="IPR024088">
    <property type="entry name" value="Tyr-tRNA-ligase_bac-type"/>
</dbReference>
<dbReference type="InterPro" id="IPR024107">
    <property type="entry name" value="Tyr-tRNA-ligase_bac_1"/>
</dbReference>
<dbReference type="NCBIfam" id="TIGR00234">
    <property type="entry name" value="tyrS"/>
    <property type="match status" value="1"/>
</dbReference>
<dbReference type="PANTHER" id="PTHR11766:SF0">
    <property type="entry name" value="TYROSINE--TRNA LIGASE, MITOCHONDRIAL"/>
    <property type="match status" value="1"/>
</dbReference>
<dbReference type="PANTHER" id="PTHR11766">
    <property type="entry name" value="TYROSYL-TRNA SYNTHETASE"/>
    <property type="match status" value="1"/>
</dbReference>
<dbReference type="Pfam" id="PF22421">
    <property type="entry name" value="SYY_C-terminal"/>
    <property type="match status" value="1"/>
</dbReference>
<dbReference type="Pfam" id="PF00579">
    <property type="entry name" value="tRNA-synt_1b"/>
    <property type="match status" value="1"/>
</dbReference>
<dbReference type="PRINTS" id="PR01040">
    <property type="entry name" value="TRNASYNTHTYR"/>
</dbReference>
<dbReference type="SMART" id="SM00363">
    <property type="entry name" value="S4"/>
    <property type="match status" value="1"/>
</dbReference>
<dbReference type="SUPFAM" id="SSF55174">
    <property type="entry name" value="Alpha-L RNA-binding motif"/>
    <property type="match status" value="1"/>
</dbReference>
<dbReference type="SUPFAM" id="SSF52374">
    <property type="entry name" value="Nucleotidylyl transferase"/>
    <property type="match status" value="1"/>
</dbReference>
<dbReference type="PROSITE" id="PS00178">
    <property type="entry name" value="AA_TRNA_LIGASE_I"/>
    <property type="match status" value="1"/>
</dbReference>
<dbReference type="PROSITE" id="PS50889">
    <property type="entry name" value="S4"/>
    <property type="match status" value="1"/>
</dbReference>
<accession>P22326</accession>
<keyword id="KW-0030">Aminoacyl-tRNA synthetase</keyword>
<keyword id="KW-0067">ATP-binding</keyword>
<keyword id="KW-0963">Cytoplasm</keyword>
<keyword id="KW-0436">Ligase</keyword>
<keyword id="KW-0547">Nucleotide-binding</keyword>
<keyword id="KW-0648">Protein biosynthesis</keyword>
<keyword id="KW-1185">Reference proteome</keyword>
<keyword id="KW-0694">RNA-binding</keyword>
<proteinExistence type="evidence at transcript level"/>
<feature type="chain" id="PRO_0000055643" description="Tyrosine--tRNA ligase 1">
    <location>
        <begin position="1"/>
        <end position="422"/>
    </location>
</feature>
<feature type="domain" description="S4 RNA-binding" evidence="1">
    <location>
        <begin position="355"/>
        <end position="421"/>
    </location>
</feature>
<feature type="short sequence motif" description="'HIGH' region">
    <location>
        <begin position="40"/>
        <end position="49"/>
    </location>
</feature>
<feature type="short sequence motif" description="'KMSKS' region">
    <location>
        <begin position="232"/>
        <end position="236"/>
    </location>
</feature>
<feature type="binding site" evidence="1">
    <location>
        <position position="35"/>
    </location>
    <ligand>
        <name>L-tyrosine</name>
        <dbReference type="ChEBI" id="CHEBI:58315"/>
    </ligand>
</feature>
<feature type="binding site" evidence="1">
    <location>
        <position position="170"/>
    </location>
    <ligand>
        <name>L-tyrosine</name>
        <dbReference type="ChEBI" id="CHEBI:58315"/>
    </ligand>
</feature>
<feature type="binding site" evidence="1">
    <location>
        <position position="174"/>
    </location>
    <ligand>
        <name>L-tyrosine</name>
        <dbReference type="ChEBI" id="CHEBI:58315"/>
    </ligand>
</feature>
<feature type="binding site" evidence="1">
    <location>
        <position position="235"/>
    </location>
    <ligand>
        <name>ATP</name>
        <dbReference type="ChEBI" id="CHEBI:30616"/>
    </ligand>
</feature>
<comment type="function">
    <text evidence="1">Catalyzes the attachment of tyrosine to tRNA(Tyr) in a two-step reaction: tyrosine is first activated by ATP to form Tyr-AMP and then transferred to the acceptor end of tRNA(Tyr).</text>
</comment>
<comment type="catalytic activity">
    <reaction evidence="1">
        <text>tRNA(Tyr) + L-tyrosine + ATP = L-tyrosyl-tRNA(Tyr) + AMP + diphosphate + H(+)</text>
        <dbReference type="Rhea" id="RHEA:10220"/>
        <dbReference type="Rhea" id="RHEA-COMP:9706"/>
        <dbReference type="Rhea" id="RHEA-COMP:9707"/>
        <dbReference type="ChEBI" id="CHEBI:15378"/>
        <dbReference type="ChEBI" id="CHEBI:30616"/>
        <dbReference type="ChEBI" id="CHEBI:33019"/>
        <dbReference type="ChEBI" id="CHEBI:58315"/>
        <dbReference type="ChEBI" id="CHEBI:78442"/>
        <dbReference type="ChEBI" id="CHEBI:78536"/>
        <dbReference type="ChEBI" id="CHEBI:456215"/>
        <dbReference type="EC" id="6.1.1.1"/>
    </reaction>
</comment>
<comment type="subunit">
    <text>Homodimer.</text>
</comment>
<comment type="subcellular location">
    <subcellularLocation>
        <location>Cytoplasm</location>
    </subcellularLocation>
</comment>
<comment type="developmental stage">
    <text>Expressed during vegetative growth.</text>
</comment>
<comment type="similarity">
    <text evidence="1">Belongs to the class-I aminoacyl-tRNA synthetase family. TyrS type 1 subfamily.</text>
</comment>